<accession>A0A7H0DND7</accession>
<dbReference type="EMBL" id="MT903340">
    <property type="protein sequence ID" value="QNP13020.1"/>
    <property type="molecule type" value="Genomic_DNA"/>
</dbReference>
<dbReference type="SMR" id="A0A7H0DND7"/>
<dbReference type="Proteomes" id="UP000516359">
    <property type="component" value="Genome"/>
</dbReference>
<dbReference type="GO" id="GO:0070062">
    <property type="term" value="C:extracellular exosome"/>
    <property type="evidence" value="ECO:0007669"/>
    <property type="project" value="TreeGrafter"/>
</dbReference>
<dbReference type="GO" id="GO:0033644">
    <property type="term" value="C:host cell membrane"/>
    <property type="evidence" value="ECO:0007669"/>
    <property type="project" value="UniProtKB-SubCell"/>
</dbReference>
<dbReference type="GO" id="GO:0005886">
    <property type="term" value="C:plasma membrane"/>
    <property type="evidence" value="ECO:0007669"/>
    <property type="project" value="InterPro"/>
</dbReference>
<dbReference type="GO" id="GO:0070053">
    <property type="term" value="F:thrombospondin receptor activity"/>
    <property type="evidence" value="ECO:0007669"/>
    <property type="project" value="InterPro"/>
</dbReference>
<dbReference type="GO" id="GO:0022409">
    <property type="term" value="P:positive regulation of cell-cell adhesion"/>
    <property type="evidence" value="ECO:0007669"/>
    <property type="project" value="InterPro"/>
</dbReference>
<dbReference type="GO" id="GO:0050729">
    <property type="term" value="P:positive regulation of inflammatory response"/>
    <property type="evidence" value="ECO:0007669"/>
    <property type="project" value="InterPro"/>
</dbReference>
<dbReference type="GO" id="GO:0050766">
    <property type="term" value="P:positive regulation of phagocytosis"/>
    <property type="evidence" value="ECO:0007669"/>
    <property type="project" value="InterPro"/>
</dbReference>
<dbReference type="Gene3D" id="2.60.40.10">
    <property type="entry name" value="Immunoglobulins"/>
    <property type="match status" value="1"/>
</dbReference>
<dbReference type="InterPro" id="IPR006704">
    <property type="entry name" value="CD47"/>
</dbReference>
<dbReference type="InterPro" id="IPR013147">
    <property type="entry name" value="CD47-like_TM"/>
</dbReference>
<dbReference type="InterPro" id="IPR013270">
    <property type="entry name" value="CD47_Vset"/>
</dbReference>
<dbReference type="InterPro" id="IPR013783">
    <property type="entry name" value="Ig-like_fold"/>
</dbReference>
<dbReference type="PANTHER" id="PTHR10613">
    <property type="entry name" value="LEUKOCYTE SURFACE ANTIGEN CD47"/>
    <property type="match status" value="1"/>
</dbReference>
<dbReference type="PANTHER" id="PTHR10613:SF0">
    <property type="entry name" value="LEUKOCYTE SURFACE ANTIGEN CD47"/>
    <property type="match status" value="1"/>
</dbReference>
<dbReference type="Pfam" id="PF04549">
    <property type="entry name" value="CD47"/>
    <property type="match status" value="1"/>
</dbReference>
<dbReference type="Pfam" id="PF08204">
    <property type="entry name" value="V-set_CD47"/>
    <property type="match status" value="1"/>
</dbReference>
<feature type="chain" id="PRO_0000457593" description="Protein OPG166">
    <location>
        <begin position="1"/>
        <end position="277"/>
    </location>
</feature>
<feature type="transmembrane region" description="Helical" evidence="2">
    <location>
        <begin position="124"/>
        <end position="144"/>
    </location>
</feature>
<feature type="transmembrane region" description="Helical" evidence="2">
    <location>
        <begin position="156"/>
        <end position="176"/>
    </location>
</feature>
<feature type="transmembrane region" description="Helical" evidence="2">
    <location>
        <begin position="186"/>
        <end position="206"/>
    </location>
</feature>
<feature type="transmembrane region" description="Helical" evidence="2">
    <location>
        <begin position="219"/>
        <end position="239"/>
    </location>
</feature>
<feature type="transmembrane region" description="Helical" evidence="2">
    <location>
        <begin position="247"/>
        <end position="267"/>
    </location>
</feature>
<feature type="glycosylation site" description="N-linked (GlcNAc...) asparagine; by host" evidence="3">
    <location>
        <position position="29"/>
    </location>
</feature>
<feature type="glycosylation site" description="N-linked (GlcNAc...) asparagine; by host" evidence="3">
    <location>
        <position position="58"/>
    </location>
</feature>
<keyword id="KW-0325">Glycoprotein</keyword>
<keyword id="KW-1043">Host membrane</keyword>
<keyword id="KW-0472">Membrane</keyword>
<keyword id="KW-1185">Reference proteome</keyword>
<keyword id="KW-0812">Transmembrane</keyword>
<keyword id="KW-1133">Transmembrane helix</keyword>
<name>PG166_MONPV</name>
<reference key="1">
    <citation type="journal article" date="2022" name="J. Infect. Dis.">
        <title>Exportation of Monkeypox virus from the African continent.</title>
        <authorList>
            <person name="Mauldin M.R."/>
            <person name="McCollum A.M."/>
            <person name="Nakazawa Y.J."/>
            <person name="Mandra A."/>
            <person name="Whitehouse E.R."/>
            <person name="Davidson W."/>
            <person name="Zhao H."/>
            <person name="Gao J."/>
            <person name="Li Y."/>
            <person name="Doty J."/>
            <person name="Yinka-Ogunleye A."/>
            <person name="Akinpelu A."/>
            <person name="Aruna O."/>
            <person name="Naidoo D."/>
            <person name="Lewandowski K."/>
            <person name="Afrough B."/>
            <person name="Graham V."/>
            <person name="Aarons E."/>
            <person name="Hewson R."/>
            <person name="Vipond R."/>
            <person name="Dunning J."/>
            <person name="Chand M."/>
            <person name="Brown C."/>
            <person name="Cohen-Gihon I."/>
            <person name="Erez N."/>
            <person name="Shifman O."/>
            <person name="Israeli O."/>
            <person name="Sharon M."/>
            <person name="Schwartz E."/>
            <person name="Beth-Din A."/>
            <person name="Zvi A."/>
            <person name="Mak T.M."/>
            <person name="Ng Y.K."/>
            <person name="Cui L."/>
            <person name="Lin R.T.P."/>
            <person name="Olson V.A."/>
            <person name="Brooks T."/>
            <person name="Paran N."/>
            <person name="Ihekweazu C."/>
            <person name="Reynolds M.G."/>
        </authorList>
    </citation>
    <scope>NUCLEOTIDE SEQUENCE [LARGE SCALE GENOMIC DNA]</scope>
    <source>
        <strain>MPXV-M5312_HM12_Rivers</strain>
    </source>
</reference>
<organismHost>
    <name type="scientific">Cynomys gunnisoni</name>
    <name type="common">Gunnison's prairie dog</name>
    <name type="synonym">Spermophilus gunnisoni</name>
    <dbReference type="NCBI Taxonomy" id="45479"/>
</organismHost>
<organismHost>
    <name type="scientific">Cynomys leucurus</name>
    <name type="common">White-tailed prairie dog</name>
    <dbReference type="NCBI Taxonomy" id="99825"/>
</organismHost>
<organismHost>
    <name type="scientific">Cynomys ludovicianus</name>
    <name type="common">Black-tailed prairie dog</name>
    <dbReference type="NCBI Taxonomy" id="45480"/>
</organismHost>
<organismHost>
    <name type="scientific">Cynomys mexicanus</name>
    <name type="common">Mexican prairie dog</name>
    <dbReference type="NCBI Taxonomy" id="99826"/>
</organismHost>
<organismHost>
    <name type="scientific">Cynomys parvidens</name>
    <name type="common">Utah prairie dog</name>
    <dbReference type="NCBI Taxonomy" id="99827"/>
</organismHost>
<organismHost>
    <name type="scientific">Gliridae</name>
    <name type="common">dormice</name>
    <dbReference type="NCBI Taxonomy" id="30650"/>
</organismHost>
<organismHost>
    <name type="scientific">Heliosciurus ruwenzorii</name>
    <name type="common">Ruwenzori sun squirrel</name>
    <dbReference type="NCBI Taxonomy" id="226685"/>
</organismHost>
<organismHost>
    <name type="scientific">Homo sapiens</name>
    <name type="common">Human</name>
    <dbReference type="NCBI Taxonomy" id="9606"/>
</organismHost>
<organismHost>
    <name type="scientific">Mus musculus</name>
    <name type="common">Mouse</name>
    <dbReference type="NCBI Taxonomy" id="10090"/>
</organismHost>
<sequence length="277" mass="31607">MLRVRILLIYLCTFVVITSTKTIEYTACNDTIIIPCIIDNPTKYIRWKLDNHDILTYNKTSKTTILSKWHTSARLHSLSDSDVSLIMEYKDILPGTYTCGDNTGIKYTVKLIQRHTNWFNDYQTMLMFIFTGITLFLLFLEIAYTSISVVFSTNLGILQVFGCVIAMIELCGAFLFYPSMFTLRHIIGLLMMTLPSIFLIITKVFSFWLLCKLSCAVHLIIYYQLAGYILTVLGLGLSLKECVDGTLLLSGLGTIMVSEHFGLLFLVCFPSTQRDYY</sequence>
<comment type="function">
    <text evidence="1">Promotes, when overexpressed, the influx of extracellular Ca(2+), leading to membrane permeability and host cell necrosis.</text>
</comment>
<comment type="subcellular location">
    <subcellularLocation>
        <location evidence="1">Host membrane</location>
        <topology evidence="1">Multi-pass membrane protein</topology>
    </subcellularLocation>
</comment>
<comment type="similarity">
    <text evidence="4">Belongs to the orthopoxvirus OPG166 protein family.</text>
</comment>
<gene>
    <name type="primary">OPG166</name>
    <name type="ORF">MPXVgp150</name>
</gene>
<proteinExistence type="inferred from homology"/>
<organism>
    <name type="scientific">Monkeypox virus</name>
    <dbReference type="NCBI Taxonomy" id="10244"/>
    <lineage>
        <taxon>Viruses</taxon>
        <taxon>Varidnaviria</taxon>
        <taxon>Bamfordvirae</taxon>
        <taxon>Nucleocytoviricota</taxon>
        <taxon>Pokkesviricetes</taxon>
        <taxon>Chitovirales</taxon>
        <taxon>Poxviridae</taxon>
        <taxon>Chordopoxvirinae</taxon>
        <taxon>Orthopoxvirus</taxon>
    </lineage>
</organism>
<evidence type="ECO:0000250" key="1">
    <source>
        <dbReference type="UniProtKB" id="P24763"/>
    </source>
</evidence>
<evidence type="ECO:0000255" key="2"/>
<evidence type="ECO:0000255" key="3">
    <source>
        <dbReference type="PROSITE-ProRule" id="PRU00498"/>
    </source>
</evidence>
<evidence type="ECO:0000305" key="4"/>
<protein>
    <recommendedName>
        <fullName>Protein OPG166</fullName>
    </recommendedName>
</protein>